<sequence>MSGEQVDILVVDDDISHCTILQALLRGWGYRVALANNGLQALEKVREKVFDLVLCDIRMAEMDGIETLKEIKTFNPSIPVLIMTAYSSVDTAVEALKSGALDYLIKPLDFDKLQLTLSEALAHTRLSESPVTETPAAQFGMVGDSPAMRALLNNITLVAPSDATVLIHGESGTGKELVARALHASSARSRRPLVILNCAALNESLLESELFGHEKGAFTGADKRREGRFVEADGGTLFLDEIGDISPLMQVRLLRAIQEREVQRVGSNQTLSVDVRLIAATHRDLAEEVSAGRFRQDLYYRLNVVTIDMPPLRHRREDIPPLARYFLQRYAERNRKAVQGFTPQAMDLLIHYAWPGNIRELENAVERAVVLLTGEYISERELPLAITGTPVADAPHGDDSIQPLVEVEKEAILAALERTGGNKTEAARRLGITRKTLLAKLSR</sequence>
<organism>
    <name type="scientific">Klebsiella oxytoca</name>
    <dbReference type="NCBI Taxonomy" id="571"/>
    <lineage>
        <taxon>Bacteria</taxon>
        <taxon>Pseudomonadati</taxon>
        <taxon>Pseudomonadota</taxon>
        <taxon>Gammaproteobacteria</taxon>
        <taxon>Enterobacterales</taxon>
        <taxon>Enterobacteriaceae</taxon>
        <taxon>Klebsiella/Raoultella group</taxon>
        <taxon>Klebsiella</taxon>
    </lineage>
</organism>
<comment type="function">
    <text evidence="2">Part of the Zra signaling pathway, an envelope stress response (ESR) system composed of the periplasmic accessory protein ZraP, the histidine kinase ZraS and the transcriptional regulator ZraR. The ZraPSR system contributes to antibiotic resistance and is important for membrane integrity in the presence of membrane-targeting biocides. ZraR is a member of the two-component regulatory system ZraS/ZraR. When activated by ZraS, acts in conjunction with sigma-54 to regulate the expression of zraP in the presence of high Zn(2+) or Pb(2+) concentrations. Also positively autoregulates the expression of the zraSR operon.</text>
</comment>
<comment type="activity regulation">
    <text evidence="2">Activity of the ZraS/ZraR two-component system is repressed by the zinc-bound form of ZraP, which probably interacts with the periplasmic region of ZraS.</text>
</comment>
<comment type="subcellular location">
    <subcellularLocation>
        <location evidence="2">Cytoplasm</location>
    </subcellularLocation>
</comment>
<comment type="PTM">
    <text evidence="2">Phosphorylated by ZraS.</text>
</comment>
<keyword id="KW-0010">Activator</keyword>
<keyword id="KW-0067">ATP-binding</keyword>
<keyword id="KW-0963">Cytoplasm</keyword>
<keyword id="KW-0238">DNA-binding</keyword>
<keyword id="KW-0547">Nucleotide-binding</keyword>
<keyword id="KW-0597">Phosphoprotein</keyword>
<keyword id="KW-0346">Stress response</keyword>
<keyword id="KW-0804">Transcription</keyword>
<keyword id="KW-0805">Transcription regulation</keyword>
<keyword id="KW-0902">Two-component regulatory system</keyword>
<protein>
    <recommendedName>
        <fullName>Transcriptional regulatory protein ZraR</fullName>
    </recommendedName>
</protein>
<feature type="chain" id="PRO_0000081281" description="Transcriptional regulatory protein ZraR">
    <location>
        <begin position="1"/>
        <end position="443"/>
    </location>
</feature>
<feature type="domain" description="Response regulatory" evidence="4">
    <location>
        <begin position="7"/>
        <end position="121"/>
    </location>
</feature>
<feature type="domain" description="Sigma-54 factor interaction" evidence="5">
    <location>
        <begin position="141"/>
        <end position="370"/>
    </location>
</feature>
<feature type="DNA-binding region" description="H-T-H motif" evidence="1">
    <location>
        <begin position="423"/>
        <end position="442"/>
    </location>
</feature>
<feature type="binding site" evidence="3">
    <location>
        <position position="172"/>
    </location>
    <ligand>
        <name>ATP</name>
        <dbReference type="ChEBI" id="CHEBI:30616"/>
    </ligand>
</feature>
<feature type="binding site" evidence="3">
    <location>
        <position position="173"/>
    </location>
    <ligand>
        <name>ATP</name>
        <dbReference type="ChEBI" id="CHEBI:30616"/>
    </ligand>
</feature>
<feature type="binding site" evidence="3">
    <location>
        <position position="329"/>
    </location>
    <ligand>
        <name>ATP</name>
        <dbReference type="ChEBI" id="CHEBI:30616"/>
    </ligand>
</feature>
<feature type="binding site" evidence="3">
    <location>
        <position position="359"/>
    </location>
    <ligand>
        <name>ATP</name>
        <dbReference type="ChEBI" id="CHEBI:30616"/>
    </ligand>
</feature>
<feature type="modified residue" description="4-aspartylphosphate" evidence="4">
    <location>
        <position position="56"/>
    </location>
</feature>
<accession>Q9APD9</accession>
<gene>
    <name type="primary">zraR</name>
    <name type="synonym">hydG</name>
</gene>
<name>ZRAR_KLEOX</name>
<proteinExistence type="inferred from homology"/>
<dbReference type="EMBL" id="AF305914">
    <property type="protein sequence ID" value="AAG59807.1"/>
    <property type="molecule type" value="Genomic_DNA"/>
</dbReference>
<dbReference type="SMR" id="Q9APD9"/>
<dbReference type="PATRIC" id="fig|571.110.peg.238"/>
<dbReference type="GO" id="GO:0005737">
    <property type="term" value="C:cytoplasm"/>
    <property type="evidence" value="ECO:0007669"/>
    <property type="project" value="UniProtKB-SubCell"/>
</dbReference>
<dbReference type="GO" id="GO:0005524">
    <property type="term" value="F:ATP binding"/>
    <property type="evidence" value="ECO:0007669"/>
    <property type="project" value="UniProtKB-KW"/>
</dbReference>
<dbReference type="GO" id="GO:0016887">
    <property type="term" value="F:ATP hydrolysis activity"/>
    <property type="evidence" value="ECO:0007669"/>
    <property type="project" value="InterPro"/>
</dbReference>
<dbReference type="GO" id="GO:0043565">
    <property type="term" value="F:sequence-specific DNA binding"/>
    <property type="evidence" value="ECO:0007669"/>
    <property type="project" value="InterPro"/>
</dbReference>
<dbReference type="GO" id="GO:0000160">
    <property type="term" value="P:phosphorelay signal transduction system"/>
    <property type="evidence" value="ECO:0007669"/>
    <property type="project" value="UniProtKB-KW"/>
</dbReference>
<dbReference type="GO" id="GO:0006355">
    <property type="term" value="P:regulation of DNA-templated transcription"/>
    <property type="evidence" value="ECO:0007669"/>
    <property type="project" value="InterPro"/>
</dbReference>
<dbReference type="CDD" id="cd00009">
    <property type="entry name" value="AAA"/>
    <property type="match status" value="1"/>
</dbReference>
<dbReference type="FunFam" id="1.10.8.60:FF:000014">
    <property type="entry name" value="DNA-binding transcriptional regulator NtrC"/>
    <property type="match status" value="1"/>
</dbReference>
<dbReference type="FunFam" id="3.40.50.300:FF:000006">
    <property type="entry name" value="DNA-binding transcriptional regulator NtrC"/>
    <property type="match status" value="1"/>
</dbReference>
<dbReference type="Gene3D" id="1.10.8.60">
    <property type="match status" value="1"/>
</dbReference>
<dbReference type="Gene3D" id="3.40.50.2300">
    <property type="match status" value="1"/>
</dbReference>
<dbReference type="Gene3D" id="1.10.10.60">
    <property type="entry name" value="Homeodomain-like"/>
    <property type="match status" value="1"/>
</dbReference>
<dbReference type="Gene3D" id="3.40.50.300">
    <property type="entry name" value="P-loop containing nucleotide triphosphate hydrolases"/>
    <property type="match status" value="1"/>
</dbReference>
<dbReference type="InterPro" id="IPR003593">
    <property type="entry name" value="AAA+_ATPase"/>
</dbReference>
<dbReference type="InterPro" id="IPR011006">
    <property type="entry name" value="CheY-like_superfamily"/>
</dbReference>
<dbReference type="InterPro" id="IPR009057">
    <property type="entry name" value="Homeodomain-like_sf"/>
</dbReference>
<dbReference type="InterPro" id="IPR002197">
    <property type="entry name" value="HTH_Fis"/>
</dbReference>
<dbReference type="InterPro" id="IPR027417">
    <property type="entry name" value="P-loop_NTPase"/>
</dbReference>
<dbReference type="InterPro" id="IPR001789">
    <property type="entry name" value="Sig_transdc_resp-reg_receiver"/>
</dbReference>
<dbReference type="InterPro" id="IPR002078">
    <property type="entry name" value="Sigma_54_int"/>
</dbReference>
<dbReference type="InterPro" id="IPR025662">
    <property type="entry name" value="Sigma_54_int_dom_ATP-bd_1"/>
</dbReference>
<dbReference type="InterPro" id="IPR025943">
    <property type="entry name" value="Sigma_54_int_dom_ATP-bd_2"/>
</dbReference>
<dbReference type="InterPro" id="IPR025944">
    <property type="entry name" value="Sigma_54_int_dom_CS"/>
</dbReference>
<dbReference type="NCBIfam" id="NF007689">
    <property type="entry name" value="PRK10365.1"/>
    <property type="match status" value="1"/>
</dbReference>
<dbReference type="PANTHER" id="PTHR32071:SF117">
    <property type="entry name" value="PTS-DEPENDENT DIHYDROXYACETONE KINASE OPERON REGULATORY PROTEIN-RELATED"/>
    <property type="match status" value="1"/>
</dbReference>
<dbReference type="PANTHER" id="PTHR32071">
    <property type="entry name" value="TRANSCRIPTIONAL REGULATORY PROTEIN"/>
    <property type="match status" value="1"/>
</dbReference>
<dbReference type="Pfam" id="PF02954">
    <property type="entry name" value="HTH_8"/>
    <property type="match status" value="1"/>
</dbReference>
<dbReference type="Pfam" id="PF00072">
    <property type="entry name" value="Response_reg"/>
    <property type="match status" value="1"/>
</dbReference>
<dbReference type="Pfam" id="PF00158">
    <property type="entry name" value="Sigma54_activat"/>
    <property type="match status" value="1"/>
</dbReference>
<dbReference type="PRINTS" id="PR01590">
    <property type="entry name" value="HTHFIS"/>
</dbReference>
<dbReference type="SMART" id="SM00382">
    <property type="entry name" value="AAA"/>
    <property type="match status" value="1"/>
</dbReference>
<dbReference type="SMART" id="SM00448">
    <property type="entry name" value="REC"/>
    <property type="match status" value="1"/>
</dbReference>
<dbReference type="SUPFAM" id="SSF52172">
    <property type="entry name" value="CheY-like"/>
    <property type="match status" value="1"/>
</dbReference>
<dbReference type="SUPFAM" id="SSF46689">
    <property type="entry name" value="Homeodomain-like"/>
    <property type="match status" value="1"/>
</dbReference>
<dbReference type="SUPFAM" id="SSF52540">
    <property type="entry name" value="P-loop containing nucleoside triphosphate hydrolases"/>
    <property type="match status" value="1"/>
</dbReference>
<dbReference type="PROSITE" id="PS50110">
    <property type="entry name" value="RESPONSE_REGULATORY"/>
    <property type="match status" value="1"/>
</dbReference>
<dbReference type="PROSITE" id="PS00675">
    <property type="entry name" value="SIGMA54_INTERACT_1"/>
    <property type="match status" value="1"/>
</dbReference>
<dbReference type="PROSITE" id="PS00676">
    <property type="entry name" value="SIGMA54_INTERACT_2"/>
    <property type="match status" value="1"/>
</dbReference>
<dbReference type="PROSITE" id="PS00688">
    <property type="entry name" value="SIGMA54_INTERACT_3"/>
    <property type="match status" value="1"/>
</dbReference>
<dbReference type="PROSITE" id="PS50045">
    <property type="entry name" value="SIGMA54_INTERACT_4"/>
    <property type="match status" value="1"/>
</dbReference>
<reference key="1">
    <citation type="journal article" date="2001" name="J. Mol. Biol.">
        <title>The hydH/G genes from Escherichia coli code for a zinc and lead responsive two-component regulatory system.</title>
        <authorList>
            <person name="Leonhartsberger S."/>
            <person name="Huber A."/>
            <person name="Lottspeich F."/>
            <person name="Boeck A."/>
        </authorList>
    </citation>
    <scope>NUCLEOTIDE SEQUENCE [GENOMIC DNA]</scope>
    <source>
        <strain>M5a1</strain>
    </source>
</reference>
<evidence type="ECO:0000250" key="1"/>
<evidence type="ECO:0000250" key="2">
    <source>
        <dbReference type="UniProtKB" id="P14375"/>
    </source>
</evidence>
<evidence type="ECO:0000250" key="3">
    <source>
        <dbReference type="UniProtKB" id="P25852"/>
    </source>
</evidence>
<evidence type="ECO:0000255" key="4">
    <source>
        <dbReference type="PROSITE-ProRule" id="PRU00169"/>
    </source>
</evidence>
<evidence type="ECO:0000255" key="5">
    <source>
        <dbReference type="PROSITE-ProRule" id="PRU00193"/>
    </source>
</evidence>